<keyword id="KW-0067">ATP-binding</keyword>
<keyword id="KW-0963">Cytoplasm</keyword>
<keyword id="KW-0319">Glycerol metabolism</keyword>
<keyword id="KW-0418">Kinase</keyword>
<keyword id="KW-0547">Nucleotide-binding</keyword>
<keyword id="KW-1185">Reference proteome</keyword>
<keyword id="KW-0808">Transferase</keyword>
<sequence length="517" mass="57261">MPCGQPGSGAAPALYVVGVDVGSTTVKCHVYDRAAGVRGSSCRKVESLYPRPGWVELDPEVLWSQFVGVIKEAVQAAGLHMRQVAALGISTQRSTFITWHKRTGKPFHNFISWQDLRSAELVNSWNRSLLLKVIHVIFTVLHFFTGNDRYLAPSVLTFSTQQTSMKLSWVFKNIPEADEAAKKNNCCFGTVDTWLLYRLTKGSVFATDYSNASSTGVFEPFTKCWNPTLCHLLSIPMSIYPPVKDTSFNFGSADSEIFGVPVPIMALVADQQSAMFGECCFQPGDVKLTMGTGGFWNVNTGGNLFASHKGLYPLIGWKIGEEVVYLTEGSMSNIGTTIKWAQDINLFTNVDETAKMARSIVDSQGVCFVPGFQVSANDPYLCASFMGLKPTTTRNHLVRAILESVAFRNKQLFDIIVKKVRIPLQTVRADGGVSNNSFVMQMTSDLINKKIEKPSNTDMSSLGAAFLAGLASGLWTDKEQLKKLRQIETVFEPQKDEKEYKPAMDTWMRAVKCSLHW</sequence>
<dbReference type="EC" id="2.7.1.30" evidence="2"/>
<dbReference type="EMBL" id="AJ719390">
    <property type="protein sequence ID" value="CAG31049.1"/>
    <property type="molecule type" value="mRNA"/>
</dbReference>
<dbReference type="RefSeq" id="NP_001026477.1">
    <property type="nucleotide sequence ID" value="NM_001031306.1"/>
</dbReference>
<dbReference type="SMR" id="Q5ZMJ4"/>
<dbReference type="FunCoup" id="Q5ZMJ4">
    <property type="interactions" value="406"/>
</dbReference>
<dbReference type="STRING" id="9031.ENSGALP00000048645"/>
<dbReference type="PaxDb" id="9031-ENSGALP00000004298"/>
<dbReference type="Ensembl" id="ENSGALT00010037823.1">
    <property type="protein sequence ID" value="ENSGALP00010021840.1"/>
    <property type="gene ID" value="ENSGALG00010015703.1"/>
</dbReference>
<dbReference type="GeneID" id="424779"/>
<dbReference type="KEGG" id="gga:424779"/>
<dbReference type="CTD" id="256356"/>
<dbReference type="VEuPathDB" id="HostDB:geneid_424779"/>
<dbReference type="eggNOG" id="KOG2517">
    <property type="taxonomic scope" value="Eukaryota"/>
</dbReference>
<dbReference type="GeneTree" id="ENSGT01000000214434"/>
<dbReference type="HOGENOM" id="CLU_009281_2_3_1"/>
<dbReference type="InParanoid" id="Q5ZMJ4"/>
<dbReference type="OMA" id="TFLTWNH"/>
<dbReference type="OrthoDB" id="6278781at2759"/>
<dbReference type="PhylomeDB" id="Q5ZMJ4"/>
<dbReference type="TreeFam" id="TF321504"/>
<dbReference type="UniPathway" id="UPA00618">
    <property type="reaction ID" value="UER00672"/>
</dbReference>
<dbReference type="PRO" id="PR:Q5ZMJ4"/>
<dbReference type="Proteomes" id="UP000000539">
    <property type="component" value="Chromosome 9"/>
</dbReference>
<dbReference type="Bgee" id="ENSGALG00000002729">
    <property type="expression patterns" value="Expressed in spermatid and 12 other cell types or tissues"/>
</dbReference>
<dbReference type="GO" id="GO:0005737">
    <property type="term" value="C:cytoplasm"/>
    <property type="evidence" value="ECO:0000250"/>
    <property type="project" value="UniProtKB"/>
</dbReference>
<dbReference type="GO" id="GO:0005739">
    <property type="term" value="C:mitochondrion"/>
    <property type="evidence" value="ECO:0000318"/>
    <property type="project" value="GO_Central"/>
</dbReference>
<dbReference type="GO" id="GO:0005524">
    <property type="term" value="F:ATP binding"/>
    <property type="evidence" value="ECO:0007669"/>
    <property type="project" value="UniProtKB-KW"/>
</dbReference>
<dbReference type="GO" id="GO:0004370">
    <property type="term" value="F:glycerol kinase activity"/>
    <property type="evidence" value="ECO:0000250"/>
    <property type="project" value="UniProtKB"/>
</dbReference>
<dbReference type="GO" id="GO:0019563">
    <property type="term" value="P:glycerol catabolic process"/>
    <property type="evidence" value="ECO:0007669"/>
    <property type="project" value="UniProtKB-UniPathway"/>
</dbReference>
<dbReference type="GO" id="GO:0006071">
    <property type="term" value="P:glycerol metabolic process"/>
    <property type="evidence" value="ECO:0000318"/>
    <property type="project" value="GO_Central"/>
</dbReference>
<dbReference type="GO" id="GO:0046167">
    <property type="term" value="P:glycerol-3-phosphate biosynthetic process"/>
    <property type="evidence" value="ECO:0000250"/>
    <property type="project" value="UniProtKB"/>
</dbReference>
<dbReference type="GO" id="GO:0006641">
    <property type="term" value="P:triglyceride metabolic process"/>
    <property type="evidence" value="ECO:0000318"/>
    <property type="project" value="GO_Central"/>
</dbReference>
<dbReference type="CDD" id="cd07793">
    <property type="entry name" value="ASKHA_NBD_FGGY_GK5-like"/>
    <property type="match status" value="1"/>
</dbReference>
<dbReference type="FunFam" id="3.30.420.40:FF:000102">
    <property type="entry name" value="Putative glycerol kinase 5"/>
    <property type="match status" value="1"/>
</dbReference>
<dbReference type="FunFam" id="3.30.420.40:FF:000104">
    <property type="entry name" value="putative glycerol kinase 5"/>
    <property type="match status" value="1"/>
</dbReference>
<dbReference type="Gene3D" id="3.30.420.40">
    <property type="match status" value="2"/>
</dbReference>
<dbReference type="InterPro" id="IPR043129">
    <property type="entry name" value="ATPase_NBD"/>
</dbReference>
<dbReference type="InterPro" id="IPR000577">
    <property type="entry name" value="Carb_kinase_FGGY"/>
</dbReference>
<dbReference type="InterPro" id="IPR018483">
    <property type="entry name" value="Carb_kinase_FGGY_CS"/>
</dbReference>
<dbReference type="InterPro" id="IPR018485">
    <property type="entry name" value="FGGY_C"/>
</dbReference>
<dbReference type="InterPro" id="IPR018484">
    <property type="entry name" value="FGGY_N"/>
</dbReference>
<dbReference type="InterPro" id="IPR037444">
    <property type="entry name" value="GK5"/>
</dbReference>
<dbReference type="PANTHER" id="PTHR10196:SF68">
    <property type="entry name" value="GLYCEROL KINASE 5-RELATED"/>
    <property type="match status" value="1"/>
</dbReference>
<dbReference type="PANTHER" id="PTHR10196">
    <property type="entry name" value="SUGAR KINASE"/>
    <property type="match status" value="1"/>
</dbReference>
<dbReference type="Pfam" id="PF02782">
    <property type="entry name" value="FGGY_C"/>
    <property type="match status" value="1"/>
</dbReference>
<dbReference type="Pfam" id="PF00370">
    <property type="entry name" value="FGGY_N"/>
    <property type="match status" value="1"/>
</dbReference>
<dbReference type="PIRSF" id="PIRSF000538">
    <property type="entry name" value="GlpK"/>
    <property type="match status" value="1"/>
</dbReference>
<dbReference type="SUPFAM" id="SSF53067">
    <property type="entry name" value="Actin-like ATPase domain"/>
    <property type="match status" value="2"/>
</dbReference>
<dbReference type="PROSITE" id="PS00445">
    <property type="entry name" value="FGGY_KINASES_2"/>
    <property type="match status" value="1"/>
</dbReference>
<name>GLPK5_CHICK</name>
<gene>
    <name type="primary">GK5</name>
    <name type="ORF">RCJMB04_1n17</name>
</gene>
<reference key="1">
    <citation type="journal article" date="2005" name="Genome Biol.">
        <title>Full-length cDNAs from chicken bursal lymphocytes to facilitate gene function analysis.</title>
        <authorList>
            <person name="Caldwell R.B."/>
            <person name="Kierzek A.M."/>
            <person name="Arakawa H."/>
            <person name="Bezzubov Y."/>
            <person name="Zaim J."/>
            <person name="Fiedler P."/>
            <person name="Kutter S."/>
            <person name="Blagodatski A."/>
            <person name="Kostovska D."/>
            <person name="Koter M."/>
            <person name="Plachy J."/>
            <person name="Carninci P."/>
            <person name="Hayashizaki Y."/>
            <person name="Buerstedde J.-M."/>
        </authorList>
    </citation>
    <scope>NUCLEOTIDE SEQUENCE [LARGE SCALE MRNA]</scope>
    <source>
        <strain>CB</strain>
        <tissue>Bursa of Fabricius</tissue>
    </source>
</reference>
<accession>Q5ZMJ4</accession>
<feature type="chain" id="PRO_0000323756" description="Glycerol kinase 5">
    <location>
        <begin position="1"/>
        <end position="517"/>
    </location>
</feature>
<feature type="binding site" evidence="1">
    <location>
        <position position="23"/>
    </location>
    <ligand>
        <name>ATP</name>
        <dbReference type="ChEBI" id="CHEBI:30616"/>
    </ligand>
</feature>
<feature type="binding site" evidence="1">
    <location>
        <position position="24"/>
    </location>
    <ligand>
        <name>ATP</name>
        <dbReference type="ChEBI" id="CHEBI:30616"/>
    </ligand>
</feature>
<feature type="binding site" evidence="1">
    <location>
        <position position="93"/>
    </location>
    <ligand>
        <name>glycerol</name>
        <dbReference type="ChEBI" id="CHEBI:17754"/>
    </ligand>
</feature>
<feature type="binding site" evidence="1">
    <location>
        <position position="270"/>
    </location>
    <ligand>
        <name>glycerol</name>
        <dbReference type="ChEBI" id="CHEBI:17754"/>
    </ligand>
</feature>
<feature type="binding site" evidence="1">
    <location>
        <position position="271"/>
    </location>
    <ligand>
        <name>glycerol</name>
        <dbReference type="ChEBI" id="CHEBI:17754"/>
    </ligand>
</feature>
<feature type="binding site" evidence="1">
    <location>
        <position position="292"/>
    </location>
    <ligand>
        <name>ATP</name>
        <dbReference type="ChEBI" id="CHEBI:30616"/>
    </ligand>
</feature>
<feature type="binding site" evidence="1">
    <location>
        <position position="335"/>
    </location>
    <ligand>
        <name>ATP</name>
        <dbReference type="ChEBI" id="CHEBI:30616"/>
    </ligand>
</feature>
<feature type="binding site" evidence="1">
    <location>
        <position position="432"/>
    </location>
    <ligand>
        <name>ATP</name>
        <dbReference type="ChEBI" id="CHEBI:30616"/>
    </ligand>
</feature>
<protein>
    <recommendedName>
        <fullName>Glycerol kinase 5</fullName>
        <shortName>GK 5</shortName>
        <shortName>Glycerokinase 5</shortName>
        <ecNumber evidence="2">2.7.1.30</ecNumber>
    </recommendedName>
    <alternativeName>
        <fullName>ATP:glycerol 3-phosphotransferase 5</fullName>
    </alternativeName>
</protein>
<organism>
    <name type="scientific">Gallus gallus</name>
    <name type="common">Chicken</name>
    <dbReference type="NCBI Taxonomy" id="9031"/>
    <lineage>
        <taxon>Eukaryota</taxon>
        <taxon>Metazoa</taxon>
        <taxon>Chordata</taxon>
        <taxon>Craniata</taxon>
        <taxon>Vertebrata</taxon>
        <taxon>Euteleostomi</taxon>
        <taxon>Archelosauria</taxon>
        <taxon>Archosauria</taxon>
        <taxon>Dinosauria</taxon>
        <taxon>Saurischia</taxon>
        <taxon>Theropoda</taxon>
        <taxon>Coelurosauria</taxon>
        <taxon>Aves</taxon>
        <taxon>Neognathae</taxon>
        <taxon>Galloanserae</taxon>
        <taxon>Galliformes</taxon>
        <taxon>Phasianidae</taxon>
        <taxon>Phasianinae</taxon>
        <taxon>Gallus</taxon>
    </lineage>
</organism>
<comment type="function">
    <text evidence="2">Skin-specific kinase that plays a key role in glycerol metabolism, catalyzing its phosphorylation to produce sn-glycerol 3-phosphate. Involved in skin-specific regulation of sterol regulatory element-binding protein (SREBP) processing and lipid biosynthesis.</text>
</comment>
<comment type="catalytic activity">
    <reaction evidence="2">
        <text>glycerol + ATP = sn-glycerol 3-phosphate + ADP + H(+)</text>
        <dbReference type="Rhea" id="RHEA:21644"/>
        <dbReference type="ChEBI" id="CHEBI:15378"/>
        <dbReference type="ChEBI" id="CHEBI:17754"/>
        <dbReference type="ChEBI" id="CHEBI:30616"/>
        <dbReference type="ChEBI" id="CHEBI:57597"/>
        <dbReference type="ChEBI" id="CHEBI:456216"/>
        <dbReference type="EC" id="2.7.1.30"/>
    </reaction>
    <physiologicalReaction direction="left-to-right" evidence="2">
        <dbReference type="Rhea" id="RHEA:21645"/>
    </physiologicalReaction>
</comment>
<comment type="pathway">
    <text evidence="2">Polyol metabolism; glycerol degradation via glycerol kinase pathway; sn-glycerol 3-phosphate from glycerol: step 1/1.</text>
</comment>
<comment type="subcellular location">
    <subcellularLocation>
        <location evidence="2">Cytoplasm</location>
    </subcellularLocation>
</comment>
<comment type="similarity">
    <text evidence="3">Belongs to the FGGY kinase family.</text>
</comment>
<evidence type="ECO:0000250" key="1">
    <source>
        <dbReference type="UniProtKB" id="P0A6F3"/>
    </source>
</evidence>
<evidence type="ECO:0000250" key="2">
    <source>
        <dbReference type="UniProtKB" id="Q8BX05"/>
    </source>
</evidence>
<evidence type="ECO:0000305" key="3"/>
<proteinExistence type="evidence at transcript level"/>